<comment type="function">
    <text evidence="1">Transcription regulator that activates transcription by stimulating RNA polymerase (RNAP) recycling in case of stress conditions such as supercoiled DNA or high salt concentrations. Probably acts by releasing the RNAP, when it is trapped or immobilized on tightly supercoiled DNA. Does not activate transcription on linear DNA. Probably not involved in DNA repair.</text>
</comment>
<comment type="subunit">
    <text evidence="1">Interacts with the RNAP. Has a higher affinity for the core RNAP than for the holoenzyme. Its ATPase activity is stimulated by binding to RNAP.</text>
</comment>
<comment type="similarity">
    <text evidence="1">Belongs to the SNF2/RAD54 helicase family. RapA subfamily.</text>
</comment>
<sequence length="968" mass="109030">MPFALGQRWISDTESELGLGTVVQVEGRMVTVLFPATGENRMFSRAEAPLTRVIYNPGDSVESHEGWSLAVSELTEKDGIVIYHGIHSETGEQVTLRETLLNHNIRFNKPQDRLFAGQIDRLDRFGVRYQCQMLRHKLASSDLLGLQGPRVGLIPHQMWIAHEVGRRYAPRVLLADEVGLGKTIEAGLIIHQQLLTGRAERILIIVPDTLRHQWLVEMLRRFNLRFSVFDEDRCVEAYADHDNPFYTEQLVICSLELLRKKKRLDQALDADWDLLVVDEAHHLEWTEEAPSRAYQVVEALSEVIPGVLLLTATPDQLGHESHFARLRLLDPDRFYDYDAFLAEEDSYKDVAIAAEALAGNAKLPDAAINSLTELLGEKDISPSIRLIQAEGIDAEVQQAARSELLQELLDRHGTGRVLYRNSRASVKGFPKRFFNAYPHAMPDQYQTAARVSGMMGGHKSLEAKAAQALSPEKLYQEFEDNSASWWKFDPRVDWLIEFLKSHRSKKVLIIASQAETALSLEEALRTREGIQATVFHEGMSIIERDKAGAYFAQEEGGAQALICSEIGSEGRNFQFASHLVLFDLPLNPDLLEQRIGRLDRIGQKNDIQIHLPYLEDTAQERLMKWYHQGLNAFELTCPSGHVLYSEFAEDLLNVLVVDDSDELTNLLNHTQSRYKELKHTMEQGRDKLLEINSHGGEKAMAIVQRLAQNDGDTHLIGSVIRLWDIIGVDQEDKGENSIILRPSEHMMFPTYPGLPEDGVTVTFDRDTALSRDDIALITQEHPLVQTGLDLITGSETGTTSVAILKNKALPAGTLFLELIYMADASAPKSSQLYRYLPPTPIRVLLDKNGNDLSAKVDYASFDKQLSAVNRHIGGKLVTASQPILHPLFAKGEEYAQVVVDEMVAQAREKMTQQLSAELSRLESLKAVNPNIREEELEYLRNQMQELNTYLDASQLQLDAIRMVLVSHV</sequence>
<accession>A6WSX5</accession>
<name>RAPA_SHEB8</name>
<evidence type="ECO:0000255" key="1">
    <source>
        <dbReference type="HAMAP-Rule" id="MF_01821"/>
    </source>
</evidence>
<feature type="chain" id="PRO_1000088379" description="RNA polymerase-associated protein RapA">
    <location>
        <begin position="1"/>
        <end position="968"/>
    </location>
</feature>
<feature type="domain" description="Helicase ATP-binding" evidence="1">
    <location>
        <begin position="163"/>
        <end position="332"/>
    </location>
</feature>
<feature type="domain" description="Helicase C-terminal" evidence="1">
    <location>
        <begin position="491"/>
        <end position="641"/>
    </location>
</feature>
<feature type="short sequence motif" description="DEAH box">
    <location>
        <begin position="278"/>
        <end position="281"/>
    </location>
</feature>
<feature type="binding site" evidence="1">
    <location>
        <begin position="176"/>
        <end position="183"/>
    </location>
    <ligand>
        <name>ATP</name>
        <dbReference type="ChEBI" id="CHEBI:30616"/>
    </ligand>
</feature>
<protein>
    <recommendedName>
        <fullName evidence="1">RNA polymerase-associated protein RapA</fullName>
        <ecNumber evidence="1">3.6.4.-</ecNumber>
    </recommendedName>
    <alternativeName>
        <fullName evidence="1">ATP-dependent helicase HepA</fullName>
    </alternativeName>
</protein>
<organism>
    <name type="scientific">Shewanella baltica (strain OS185)</name>
    <dbReference type="NCBI Taxonomy" id="402882"/>
    <lineage>
        <taxon>Bacteria</taxon>
        <taxon>Pseudomonadati</taxon>
        <taxon>Pseudomonadota</taxon>
        <taxon>Gammaproteobacteria</taxon>
        <taxon>Alteromonadales</taxon>
        <taxon>Shewanellaceae</taxon>
        <taxon>Shewanella</taxon>
    </lineage>
</organism>
<gene>
    <name evidence="1" type="primary">rapA</name>
    <name type="ordered locus">Shew185_3790</name>
</gene>
<proteinExistence type="inferred from homology"/>
<dbReference type="EC" id="3.6.4.-" evidence="1"/>
<dbReference type="EMBL" id="CP000753">
    <property type="protein sequence ID" value="ABS09914.1"/>
    <property type="molecule type" value="Genomic_DNA"/>
</dbReference>
<dbReference type="RefSeq" id="WP_012090268.1">
    <property type="nucleotide sequence ID" value="NC_009665.1"/>
</dbReference>
<dbReference type="SMR" id="A6WSX5"/>
<dbReference type="KEGG" id="sbm:Shew185_3790"/>
<dbReference type="HOGENOM" id="CLU_011520_0_0_6"/>
<dbReference type="GO" id="GO:0005524">
    <property type="term" value="F:ATP binding"/>
    <property type="evidence" value="ECO:0007669"/>
    <property type="project" value="UniProtKB-UniRule"/>
</dbReference>
<dbReference type="GO" id="GO:0003677">
    <property type="term" value="F:DNA binding"/>
    <property type="evidence" value="ECO:0007669"/>
    <property type="project" value="UniProtKB-KW"/>
</dbReference>
<dbReference type="GO" id="GO:0004386">
    <property type="term" value="F:helicase activity"/>
    <property type="evidence" value="ECO:0007669"/>
    <property type="project" value="UniProtKB-UniRule"/>
</dbReference>
<dbReference type="GO" id="GO:0016817">
    <property type="term" value="F:hydrolase activity, acting on acid anhydrides"/>
    <property type="evidence" value="ECO:0007669"/>
    <property type="project" value="InterPro"/>
</dbReference>
<dbReference type="GO" id="GO:0006355">
    <property type="term" value="P:regulation of DNA-templated transcription"/>
    <property type="evidence" value="ECO:0007669"/>
    <property type="project" value="UniProtKB-UniRule"/>
</dbReference>
<dbReference type="CDD" id="cd18011">
    <property type="entry name" value="DEXDc_RapA"/>
    <property type="match status" value="1"/>
</dbReference>
<dbReference type="CDD" id="cd18793">
    <property type="entry name" value="SF2_C_SNF"/>
    <property type="match status" value="1"/>
</dbReference>
<dbReference type="Gene3D" id="2.30.30.140">
    <property type="match status" value="1"/>
</dbReference>
<dbReference type="Gene3D" id="2.30.30.930">
    <property type="match status" value="1"/>
</dbReference>
<dbReference type="Gene3D" id="3.30.360.80">
    <property type="match status" value="1"/>
</dbReference>
<dbReference type="Gene3D" id="6.10.140.1500">
    <property type="match status" value="1"/>
</dbReference>
<dbReference type="Gene3D" id="6.10.140.2230">
    <property type="match status" value="1"/>
</dbReference>
<dbReference type="Gene3D" id="3.40.50.300">
    <property type="entry name" value="P-loop containing nucleotide triphosphate hydrolases"/>
    <property type="match status" value="1"/>
</dbReference>
<dbReference type="Gene3D" id="3.40.50.10810">
    <property type="entry name" value="Tandem AAA-ATPase domain"/>
    <property type="match status" value="1"/>
</dbReference>
<dbReference type="HAMAP" id="MF_01821">
    <property type="entry name" value="Helicase_RapA"/>
    <property type="match status" value="1"/>
</dbReference>
<dbReference type="InterPro" id="IPR014001">
    <property type="entry name" value="Helicase_ATP-bd"/>
</dbReference>
<dbReference type="InterPro" id="IPR001650">
    <property type="entry name" value="Helicase_C-like"/>
</dbReference>
<dbReference type="InterPro" id="IPR023949">
    <property type="entry name" value="Helicase_RapA"/>
</dbReference>
<dbReference type="InterPro" id="IPR027417">
    <property type="entry name" value="P-loop_NTPase"/>
</dbReference>
<dbReference type="InterPro" id="IPR022737">
    <property type="entry name" value="RapA_C"/>
</dbReference>
<dbReference type="InterPro" id="IPR038718">
    <property type="entry name" value="SNF2-like_sf"/>
</dbReference>
<dbReference type="InterPro" id="IPR049730">
    <property type="entry name" value="SNF2/RAD54-like_C"/>
</dbReference>
<dbReference type="InterPro" id="IPR000330">
    <property type="entry name" value="SNF2_N"/>
</dbReference>
<dbReference type="InterPro" id="IPR040765">
    <property type="entry name" value="Tudor_1_RapA"/>
</dbReference>
<dbReference type="InterPro" id="IPR040766">
    <property type="entry name" value="Tudor_2_RapA"/>
</dbReference>
<dbReference type="NCBIfam" id="NF003426">
    <property type="entry name" value="PRK04914.1"/>
    <property type="match status" value="1"/>
</dbReference>
<dbReference type="PANTHER" id="PTHR45766">
    <property type="entry name" value="DNA ANNEALING HELICASE AND ENDONUCLEASE ZRANB3 FAMILY MEMBER"/>
    <property type="match status" value="1"/>
</dbReference>
<dbReference type="PANTHER" id="PTHR45766:SF6">
    <property type="entry name" value="SWI_SNF-RELATED MATRIX-ASSOCIATED ACTIN-DEPENDENT REGULATOR OF CHROMATIN SUBFAMILY A-LIKE PROTEIN 1"/>
    <property type="match status" value="1"/>
</dbReference>
<dbReference type="Pfam" id="PF00271">
    <property type="entry name" value="Helicase_C"/>
    <property type="match status" value="1"/>
</dbReference>
<dbReference type="Pfam" id="PF12137">
    <property type="entry name" value="RapA_C"/>
    <property type="match status" value="1"/>
</dbReference>
<dbReference type="Pfam" id="PF00176">
    <property type="entry name" value="SNF2-rel_dom"/>
    <property type="match status" value="1"/>
</dbReference>
<dbReference type="Pfam" id="PF18339">
    <property type="entry name" value="Tudor_1_RapA"/>
    <property type="match status" value="1"/>
</dbReference>
<dbReference type="Pfam" id="PF18337">
    <property type="entry name" value="Tudor_RapA"/>
    <property type="match status" value="1"/>
</dbReference>
<dbReference type="SMART" id="SM00487">
    <property type="entry name" value="DEXDc"/>
    <property type="match status" value="1"/>
</dbReference>
<dbReference type="SMART" id="SM00490">
    <property type="entry name" value="HELICc"/>
    <property type="match status" value="1"/>
</dbReference>
<dbReference type="SUPFAM" id="SSF52540">
    <property type="entry name" value="P-loop containing nucleoside triphosphate hydrolases"/>
    <property type="match status" value="2"/>
</dbReference>
<dbReference type="PROSITE" id="PS51192">
    <property type="entry name" value="HELICASE_ATP_BIND_1"/>
    <property type="match status" value="1"/>
</dbReference>
<dbReference type="PROSITE" id="PS51194">
    <property type="entry name" value="HELICASE_CTER"/>
    <property type="match status" value="1"/>
</dbReference>
<reference key="1">
    <citation type="submission" date="2007-07" db="EMBL/GenBank/DDBJ databases">
        <title>Complete sequence of chromosome of Shewanella baltica OS185.</title>
        <authorList>
            <consortium name="US DOE Joint Genome Institute"/>
            <person name="Copeland A."/>
            <person name="Lucas S."/>
            <person name="Lapidus A."/>
            <person name="Barry K."/>
            <person name="Glavina del Rio T."/>
            <person name="Dalin E."/>
            <person name="Tice H."/>
            <person name="Pitluck S."/>
            <person name="Sims D."/>
            <person name="Brettin T."/>
            <person name="Bruce D."/>
            <person name="Detter J.C."/>
            <person name="Han C."/>
            <person name="Schmutz J."/>
            <person name="Larimer F."/>
            <person name="Land M."/>
            <person name="Hauser L."/>
            <person name="Kyrpides N."/>
            <person name="Mikhailova N."/>
            <person name="Brettar I."/>
            <person name="Rodrigues J."/>
            <person name="Konstantinidis K."/>
            <person name="Tiedje J."/>
            <person name="Richardson P."/>
        </authorList>
    </citation>
    <scope>NUCLEOTIDE SEQUENCE [LARGE SCALE GENOMIC DNA]</scope>
    <source>
        <strain>OS185</strain>
    </source>
</reference>
<keyword id="KW-0010">Activator</keyword>
<keyword id="KW-0067">ATP-binding</keyword>
<keyword id="KW-0238">DNA-binding</keyword>
<keyword id="KW-0347">Helicase</keyword>
<keyword id="KW-0378">Hydrolase</keyword>
<keyword id="KW-0547">Nucleotide-binding</keyword>
<keyword id="KW-0804">Transcription</keyword>
<keyword id="KW-0805">Transcription regulation</keyword>